<sequence length="395" mass="43371">MAKETYVRTKPHVNIGTIGHVDHGKTTLTAAISKVLAEKQGVDATDFAEIDNAPEEKERGITINTSHIEYETEKRHYAHIDAPGHADYVKNMITGAAQMDGAILVVAATDGPMPQTREHILLARQVGVDYLVVFLNKTDLVDDEELVELVEMEVRELLSEYDFPGDDIPVLKGSALKALEGDPEQVKVIEELMDTVDSYIPEPARETDKPFLMPVEDVFTITGRGTVASGRVDRGVLTTGTEIEIVGLKDEVQKTTVTGIEMFRKTLEEAQAGDNIGALLRGVDRSNIERGQVLAKPGSIKTHKKFKAEVYVLTKEEGGRHTPFFTNYRPQFYFHTTDVTGVVELPAGVEMVMPGDQVTFEIELISPVAIEQGLKFTVREGGHTVGAGTVTDIED</sequence>
<gene>
    <name evidence="2" type="primary">tuf</name>
    <name type="ordered locus">LEUM_0627</name>
</gene>
<feature type="chain" id="PRO_1000015681" description="Elongation factor Tu">
    <location>
        <begin position="1"/>
        <end position="395"/>
    </location>
</feature>
<feature type="domain" description="tr-type G">
    <location>
        <begin position="10"/>
        <end position="204"/>
    </location>
</feature>
<feature type="region of interest" description="G1" evidence="1">
    <location>
        <begin position="19"/>
        <end position="26"/>
    </location>
</feature>
<feature type="region of interest" description="G2" evidence="1">
    <location>
        <begin position="60"/>
        <end position="64"/>
    </location>
</feature>
<feature type="region of interest" description="G3" evidence="1">
    <location>
        <begin position="81"/>
        <end position="84"/>
    </location>
</feature>
<feature type="region of interest" description="G4" evidence="1">
    <location>
        <begin position="136"/>
        <end position="139"/>
    </location>
</feature>
<feature type="region of interest" description="G5" evidence="1">
    <location>
        <begin position="174"/>
        <end position="176"/>
    </location>
</feature>
<feature type="binding site" evidence="2">
    <location>
        <begin position="19"/>
        <end position="26"/>
    </location>
    <ligand>
        <name>GTP</name>
        <dbReference type="ChEBI" id="CHEBI:37565"/>
    </ligand>
</feature>
<feature type="binding site" evidence="2">
    <location>
        <position position="26"/>
    </location>
    <ligand>
        <name>Mg(2+)</name>
        <dbReference type="ChEBI" id="CHEBI:18420"/>
    </ligand>
</feature>
<feature type="binding site" evidence="2">
    <location>
        <begin position="81"/>
        <end position="85"/>
    </location>
    <ligand>
        <name>GTP</name>
        <dbReference type="ChEBI" id="CHEBI:37565"/>
    </ligand>
</feature>
<feature type="binding site" evidence="2">
    <location>
        <begin position="136"/>
        <end position="139"/>
    </location>
    <ligand>
        <name>GTP</name>
        <dbReference type="ChEBI" id="CHEBI:37565"/>
    </ligand>
</feature>
<reference key="1">
    <citation type="journal article" date="2006" name="Proc. Natl. Acad. Sci. U.S.A.">
        <title>Comparative genomics of the lactic acid bacteria.</title>
        <authorList>
            <person name="Makarova K.S."/>
            <person name="Slesarev A."/>
            <person name="Wolf Y.I."/>
            <person name="Sorokin A."/>
            <person name="Mirkin B."/>
            <person name="Koonin E.V."/>
            <person name="Pavlov A."/>
            <person name="Pavlova N."/>
            <person name="Karamychev V."/>
            <person name="Polouchine N."/>
            <person name="Shakhova V."/>
            <person name="Grigoriev I."/>
            <person name="Lou Y."/>
            <person name="Rohksar D."/>
            <person name="Lucas S."/>
            <person name="Huang K."/>
            <person name="Goodstein D.M."/>
            <person name="Hawkins T."/>
            <person name="Plengvidhya V."/>
            <person name="Welker D."/>
            <person name="Hughes J."/>
            <person name="Goh Y."/>
            <person name="Benson A."/>
            <person name="Baldwin K."/>
            <person name="Lee J.-H."/>
            <person name="Diaz-Muniz I."/>
            <person name="Dosti B."/>
            <person name="Smeianov V."/>
            <person name="Wechter W."/>
            <person name="Barabote R."/>
            <person name="Lorca G."/>
            <person name="Altermann E."/>
            <person name="Barrangou R."/>
            <person name="Ganesan B."/>
            <person name="Xie Y."/>
            <person name="Rawsthorne H."/>
            <person name="Tamir D."/>
            <person name="Parker C."/>
            <person name="Breidt F."/>
            <person name="Broadbent J.R."/>
            <person name="Hutkins R."/>
            <person name="O'Sullivan D."/>
            <person name="Steele J."/>
            <person name="Unlu G."/>
            <person name="Saier M.H. Jr."/>
            <person name="Klaenhammer T."/>
            <person name="Richardson P."/>
            <person name="Kozyavkin S."/>
            <person name="Weimer B.C."/>
            <person name="Mills D.A."/>
        </authorList>
    </citation>
    <scope>NUCLEOTIDE SEQUENCE [LARGE SCALE GENOMIC DNA]</scope>
    <source>
        <strain>ATCC 8293 / DSM 20343 / BCRC 11652 / CCM 1803 / JCM 6124 / NCDO 523 / NBRC 100496 / NCIMB 8023 / NCTC 12954 / NRRL B-1118 / 37Y</strain>
    </source>
</reference>
<organism>
    <name type="scientific">Leuconostoc mesenteroides subsp. mesenteroides (strain ATCC 8293 / DSM 20343 / BCRC 11652 / CCM 1803 / JCM 6124 / NCDO 523 / NBRC 100496 / NCIMB 8023 / NCTC 12954 / NRRL B-1118 / 37Y)</name>
    <dbReference type="NCBI Taxonomy" id="203120"/>
    <lineage>
        <taxon>Bacteria</taxon>
        <taxon>Bacillati</taxon>
        <taxon>Bacillota</taxon>
        <taxon>Bacilli</taxon>
        <taxon>Lactobacillales</taxon>
        <taxon>Lactobacillaceae</taxon>
        <taxon>Leuconostoc</taxon>
    </lineage>
</organism>
<dbReference type="EC" id="3.6.5.3" evidence="2"/>
<dbReference type="EMBL" id="CP000414">
    <property type="protein sequence ID" value="ABJ61740.1"/>
    <property type="molecule type" value="Genomic_DNA"/>
</dbReference>
<dbReference type="RefSeq" id="WP_011679439.1">
    <property type="nucleotide sequence ID" value="NC_008531.1"/>
</dbReference>
<dbReference type="SMR" id="Q03YI2"/>
<dbReference type="EnsemblBacteria" id="ABJ61740">
    <property type="protein sequence ID" value="ABJ61740"/>
    <property type="gene ID" value="LEUM_0627"/>
</dbReference>
<dbReference type="GeneID" id="29576737"/>
<dbReference type="KEGG" id="lme:LEUM_0627"/>
<dbReference type="eggNOG" id="COG0050">
    <property type="taxonomic scope" value="Bacteria"/>
</dbReference>
<dbReference type="HOGENOM" id="CLU_007265_0_1_9"/>
<dbReference type="Proteomes" id="UP000000362">
    <property type="component" value="Chromosome"/>
</dbReference>
<dbReference type="GO" id="GO:0005829">
    <property type="term" value="C:cytosol"/>
    <property type="evidence" value="ECO:0007669"/>
    <property type="project" value="TreeGrafter"/>
</dbReference>
<dbReference type="GO" id="GO:0005525">
    <property type="term" value="F:GTP binding"/>
    <property type="evidence" value="ECO:0007669"/>
    <property type="project" value="UniProtKB-UniRule"/>
</dbReference>
<dbReference type="GO" id="GO:0003924">
    <property type="term" value="F:GTPase activity"/>
    <property type="evidence" value="ECO:0007669"/>
    <property type="project" value="InterPro"/>
</dbReference>
<dbReference type="GO" id="GO:0003746">
    <property type="term" value="F:translation elongation factor activity"/>
    <property type="evidence" value="ECO:0007669"/>
    <property type="project" value="UniProtKB-UniRule"/>
</dbReference>
<dbReference type="CDD" id="cd01884">
    <property type="entry name" value="EF_Tu"/>
    <property type="match status" value="1"/>
</dbReference>
<dbReference type="CDD" id="cd03697">
    <property type="entry name" value="EFTU_II"/>
    <property type="match status" value="1"/>
</dbReference>
<dbReference type="CDD" id="cd03707">
    <property type="entry name" value="EFTU_III"/>
    <property type="match status" value="1"/>
</dbReference>
<dbReference type="FunFam" id="2.40.30.10:FF:000001">
    <property type="entry name" value="Elongation factor Tu"/>
    <property type="match status" value="1"/>
</dbReference>
<dbReference type="FunFam" id="3.40.50.300:FF:000003">
    <property type="entry name" value="Elongation factor Tu"/>
    <property type="match status" value="1"/>
</dbReference>
<dbReference type="Gene3D" id="3.40.50.300">
    <property type="entry name" value="P-loop containing nucleotide triphosphate hydrolases"/>
    <property type="match status" value="1"/>
</dbReference>
<dbReference type="Gene3D" id="2.40.30.10">
    <property type="entry name" value="Translation factors"/>
    <property type="match status" value="2"/>
</dbReference>
<dbReference type="HAMAP" id="MF_00118_B">
    <property type="entry name" value="EF_Tu_B"/>
    <property type="match status" value="1"/>
</dbReference>
<dbReference type="InterPro" id="IPR041709">
    <property type="entry name" value="EF-Tu_GTP-bd"/>
</dbReference>
<dbReference type="InterPro" id="IPR050055">
    <property type="entry name" value="EF-Tu_GTPase"/>
</dbReference>
<dbReference type="InterPro" id="IPR004161">
    <property type="entry name" value="EFTu-like_2"/>
</dbReference>
<dbReference type="InterPro" id="IPR033720">
    <property type="entry name" value="EFTU_2"/>
</dbReference>
<dbReference type="InterPro" id="IPR031157">
    <property type="entry name" value="G_TR_CS"/>
</dbReference>
<dbReference type="InterPro" id="IPR027417">
    <property type="entry name" value="P-loop_NTPase"/>
</dbReference>
<dbReference type="InterPro" id="IPR005225">
    <property type="entry name" value="Small_GTP-bd"/>
</dbReference>
<dbReference type="InterPro" id="IPR000795">
    <property type="entry name" value="T_Tr_GTP-bd_dom"/>
</dbReference>
<dbReference type="InterPro" id="IPR009000">
    <property type="entry name" value="Transl_B-barrel_sf"/>
</dbReference>
<dbReference type="InterPro" id="IPR009001">
    <property type="entry name" value="Transl_elong_EF1A/Init_IF2_C"/>
</dbReference>
<dbReference type="InterPro" id="IPR004541">
    <property type="entry name" value="Transl_elong_EFTu/EF1A_bac/org"/>
</dbReference>
<dbReference type="InterPro" id="IPR004160">
    <property type="entry name" value="Transl_elong_EFTu/EF1A_C"/>
</dbReference>
<dbReference type="NCBIfam" id="TIGR00485">
    <property type="entry name" value="EF-Tu"/>
    <property type="match status" value="1"/>
</dbReference>
<dbReference type="NCBIfam" id="NF000766">
    <property type="entry name" value="PRK00049.1"/>
    <property type="match status" value="1"/>
</dbReference>
<dbReference type="NCBIfam" id="NF009372">
    <property type="entry name" value="PRK12735.1"/>
    <property type="match status" value="1"/>
</dbReference>
<dbReference type="NCBIfam" id="NF009373">
    <property type="entry name" value="PRK12736.1"/>
    <property type="match status" value="1"/>
</dbReference>
<dbReference type="NCBIfam" id="TIGR00231">
    <property type="entry name" value="small_GTP"/>
    <property type="match status" value="1"/>
</dbReference>
<dbReference type="PANTHER" id="PTHR43721:SF22">
    <property type="entry name" value="ELONGATION FACTOR TU, MITOCHONDRIAL"/>
    <property type="match status" value="1"/>
</dbReference>
<dbReference type="PANTHER" id="PTHR43721">
    <property type="entry name" value="ELONGATION FACTOR TU-RELATED"/>
    <property type="match status" value="1"/>
</dbReference>
<dbReference type="Pfam" id="PF00009">
    <property type="entry name" value="GTP_EFTU"/>
    <property type="match status" value="1"/>
</dbReference>
<dbReference type="Pfam" id="PF03144">
    <property type="entry name" value="GTP_EFTU_D2"/>
    <property type="match status" value="1"/>
</dbReference>
<dbReference type="Pfam" id="PF03143">
    <property type="entry name" value="GTP_EFTU_D3"/>
    <property type="match status" value="1"/>
</dbReference>
<dbReference type="PRINTS" id="PR00315">
    <property type="entry name" value="ELONGATNFCT"/>
</dbReference>
<dbReference type="SUPFAM" id="SSF50465">
    <property type="entry name" value="EF-Tu/eEF-1alpha/eIF2-gamma C-terminal domain"/>
    <property type="match status" value="1"/>
</dbReference>
<dbReference type="SUPFAM" id="SSF52540">
    <property type="entry name" value="P-loop containing nucleoside triphosphate hydrolases"/>
    <property type="match status" value="1"/>
</dbReference>
<dbReference type="SUPFAM" id="SSF50447">
    <property type="entry name" value="Translation proteins"/>
    <property type="match status" value="1"/>
</dbReference>
<dbReference type="PROSITE" id="PS00301">
    <property type="entry name" value="G_TR_1"/>
    <property type="match status" value="1"/>
</dbReference>
<dbReference type="PROSITE" id="PS51722">
    <property type="entry name" value="G_TR_2"/>
    <property type="match status" value="1"/>
</dbReference>
<comment type="function">
    <text evidence="2">GTP hydrolase that promotes the GTP-dependent binding of aminoacyl-tRNA to the A-site of ribosomes during protein biosynthesis.</text>
</comment>
<comment type="catalytic activity">
    <reaction evidence="2">
        <text>GTP + H2O = GDP + phosphate + H(+)</text>
        <dbReference type="Rhea" id="RHEA:19669"/>
        <dbReference type="ChEBI" id="CHEBI:15377"/>
        <dbReference type="ChEBI" id="CHEBI:15378"/>
        <dbReference type="ChEBI" id="CHEBI:37565"/>
        <dbReference type="ChEBI" id="CHEBI:43474"/>
        <dbReference type="ChEBI" id="CHEBI:58189"/>
        <dbReference type="EC" id="3.6.5.3"/>
    </reaction>
    <physiologicalReaction direction="left-to-right" evidence="2">
        <dbReference type="Rhea" id="RHEA:19670"/>
    </physiologicalReaction>
</comment>
<comment type="subunit">
    <text evidence="2">Monomer.</text>
</comment>
<comment type="subcellular location">
    <subcellularLocation>
        <location evidence="2">Cytoplasm</location>
    </subcellularLocation>
</comment>
<comment type="similarity">
    <text evidence="2">Belongs to the TRAFAC class translation factor GTPase superfamily. Classic translation factor GTPase family. EF-Tu/EF-1A subfamily.</text>
</comment>
<proteinExistence type="inferred from homology"/>
<accession>Q03YI2</accession>
<protein>
    <recommendedName>
        <fullName evidence="2">Elongation factor Tu</fullName>
        <shortName evidence="2">EF-Tu</shortName>
        <ecNumber evidence="2">3.6.5.3</ecNumber>
    </recommendedName>
</protein>
<evidence type="ECO:0000250" key="1"/>
<evidence type="ECO:0000255" key="2">
    <source>
        <dbReference type="HAMAP-Rule" id="MF_00118"/>
    </source>
</evidence>
<name>EFTU_LEUMM</name>
<keyword id="KW-0963">Cytoplasm</keyword>
<keyword id="KW-0251">Elongation factor</keyword>
<keyword id="KW-0342">GTP-binding</keyword>
<keyword id="KW-0378">Hydrolase</keyword>
<keyword id="KW-0460">Magnesium</keyword>
<keyword id="KW-0479">Metal-binding</keyword>
<keyword id="KW-0547">Nucleotide-binding</keyword>
<keyword id="KW-0648">Protein biosynthesis</keyword>
<keyword id="KW-1185">Reference proteome</keyword>